<reference key="1">
    <citation type="journal article" date="2009" name="BMC Genomics">
        <title>Complete genome sequence of the sugarcane nitrogen-fixing endophyte Gluconacetobacter diazotrophicus Pal5.</title>
        <authorList>
            <person name="Bertalan M."/>
            <person name="Albano R."/>
            <person name="de Padua V."/>
            <person name="Rouws L."/>
            <person name="Rojas C."/>
            <person name="Hemerly A."/>
            <person name="Teixeira K."/>
            <person name="Schwab S."/>
            <person name="Araujo J."/>
            <person name="Oliveira A."/>
            <person name="Franca L."/>
            <person name="Magalhaes V."/>
            <person name="Alqueres S."/>
            <person name="Cardoso A."/>
            <person name="Almeida W."/>
            <person name="Loureiro M.M."/>
            <person name="Nogueira E."/>
            <person name="Cidade D."/>
            <person name="Oliveira D."/>
            <person name="Simao T."/>
            <person name="Macedo J."/>
            <person name="Valadao A."/>
            <person name="Dreschsel M."/>
            <person name="Freitas F."/>
            <person name="Vidal M."/>
            <person name="Guedes H."/>
            <person name="Rodrigues E."/>
            <person name="Meneses C."/>
            <person name="Brioso P."/>
            <person name="Pozzer L."/>
            <person name="Figueiredo D."/>
            <person name="Montano H."/>
            <person name="Junior J."/>
            <person name="de Souza Filho G."/>
            <person name="Martin Quintana Flores V."/>
            <person name="Ferreira B."/>
            <person name="Branco A."/>
            <person name="Gonzalez P."/>
            <person name="Guillobel H."/>
            <person name="Lemos M."/>
            <person name="Seibel L."/>
            <person name="Macedo J."/>
            <person name="Alves-Ferreira M."/>
            <person name="Sachetto-Martins G."/>
            <person name="Coelho A."/>
            <person name="Santos E."/>
            <person name="Amaral G."/>
            <person name="Neves A."/>
            <person name="Pacheco A.B."/>
            <person name="Carvalho D."/>
            <person name="Lery L."/>
            <person name="Bisch P."/>
            <person name="Rossle S.C."/>
            <person name="Urmenyi T."/>
            <person name="Rael Pereira A."/>
            <person name="Silva R."/>
            <person name="Rondinelli E."/>
            <person name="von Kruger W."/>
            <person name="Martins O."/>
            <person name="Baldani J.I."/>
            <person name="Ferreira P.C."/>
        </authorList>
    </citation>
    <scope>NUCLEOTIDE SEQUENCE [LARGE SCALE GENOMIC DNA]</scope>
    <source>
        <strain>ATCC 49037 / DSM 5601 / CCUG 37298 / CIP 103539 / LMG 7603 / PAl5</strain>
    </source>
</reference>
<reference key="2">
    <citation type="journal article" date="2010" name="Stand. Genomic Sci.">
        <title>Two genome sequences of the same bacterial strain, Gluconacetobacter diazotrophicus PAl 5, suggest a new standard in genome sequence submission.</title>
        <authorList>
            <person name="Giongo A."/>
            <person name="Tyler H.L."/>
            <person name="Zipperer U.N."/>
            <person name="Triplett E.W."/>
        </authorList>
    </citation>
    <scope>NUCLEOTIDE SEQUENCE [LARGE SCALE GENOMIC DNA]</scope>
    <source>
        <strain>ATCC 49037 / DSM 5601 / CCUG 37298 / CIP 103539 / LMG 7603 / PAl5</strain>
    </source>
</reference>
<evidence type="ECO:0000255" key="1">
    <source>
        <dbReference type="HAMAP-Rule" id="MF_00600"/>
    </source>
</evidence>
<organism>
    <name type="scientific">Gluconacetobacter diazotrophicus (strain ATCC 49037 / DSM 5601 / CCUG 37298 / CIP 103539 / LMG 7603 / PAl5)</name>
    <dbReference type="NCBI Taxonomy" id="272568"/>
    <lineage>
        <taxon>Bacteria</taxon>
        <taxon>Pseudomonadati</taxon>
        <taxon>Pseudomonadota</taxon>
        <taxon>Alphaproteobacteria</taxon>
        <taxon>Acetobacterales</taxon>
        <taxon>Acetobacteraceae</taxon>
        <taxon>Gluconacetobacter</taxon>
    </lineage>
</organism>
<gene>
    <name evidence="1" type="primary">groEL2</name>
    <name evidence="1" type="synonym">groL2</name>
    <name type="ordered locus">GDI2647</name>
    <name type="ordered locus">Gdia_0861</name>
</gene>
<dbReference type="EC" id="5.6.1.7" evidence="1"/>
<dbReference type="EMBL" id="AM889285">
    <property type="protein sequence ID" value="CAP56590.1"/>
    <property type="molecule type" value="Genomic_DNA"/>
</dbReference>
<dbReference type="EMBL" id="CP001189">
    <property type="protein sequence ID" value="ACI50651.1"/>
    <property type="molecule type" value="Genomic_DNA"/>
</dbReference>
<dbReference type="RefSeq" id="WP_012226710.1">
    <property type="nucleotide sequence ID" value="NC_010125.1"/>
</dbReference>
<dbReference type="SMR" id="A9HPH6"/>
<dbReference type="STRING" id="272568.GDI2647"/>
<dbReference type="KEGG" id="gdi:GDI2647"/>
<dbReference type="KEGG" id="gdj:Gdia_0861"/>
<dbReference type="eggNOG" id="COG0459">
    <property type="taxonomic scope" value="Bacteria"/>
</dbReference>
<dbReference type="HOGENOM" id="CLU_016503_3_0_5"/>
<dbReference type="OrthoDB" id="9766614at2"/>
<dbReference type="Proteomes" id="UP000001176">
    <property type="component" value="Chromosome"/>
</dbReference>
<dbReference type="GO" id="GO:0005737">
    <property type="term" value="C:cytoplasm"/>
    <property type="evidence" value="ECO:0007669"/>
    <property type="project" value="UniProtKB-SubCell"/>
</dbReference>
<dbReference type="GO" id="GO:0005524">
    <property type="term" value="F:ATP binding"/>
    <property type="evidence" value="ECO:0007669"/>
    <property type="project" value="UniProtKB-UniRule"/>
</dbReference>
<dbReference type="GO" id="GO:0140662">
    <property type="term" value="F:ATP-dependent protein folding chaperone"/>
    <property type="evidence" value="ECO:0007669"/>
    <property type="project" value="InterPro"/>
</dbReference>
<dbReference type="GO" id="GO:0016853">
    <property type="term" value="F:isomerase activity"/>
    <property type="evidence" value="ECO:0007669"/>
    <property type="project" value="UniProtKB-KW"/>
</dbReference>
<dbReference type="GO" id="GO:0051082">
    <property type="term" value="F:unfolded protein binding"/>
    <property type="evidence" value="ECO:0007669"/>
    <property type="project" value="UniProtKB-UniRule"/>
</dbReference>
<dbReference type="GO" id="GO:0042026">
    <property type="term" value="P:protein refolding"/>
    <property type="evidence" value="ECO:0007669"/>
    <property type="project" value="UniProtKB-UniRule"/>
</dbReference>
<dbReference type="CDD" id="cd03344">
    <property type="entry name" value="GroEL"/>
    <property type="match status" value="1"/>
</dbReference>
<dbReference type="FunFam" id="1.10.560.10:FF:000001">
    <property type="entry name" value="60 kDa chaperonin"/>
    <property type="match status" value="1"/>
</dbReference>
<dbReference type="FunFam" id="3.50.7.10:FF:000001">
    <property type="entry name" value="60 kDa chaperonin"/>
    <property type="match status" value="1"/>
</dbReference>
<dbReference type="Gene3D" id="3.50.7.10">
    <property type="entry name" value="GroEL"/>
    <property type="match status" value="1"/>
</dbReference>
<dbReference type="Gene3D" id="1.10.560.10">
    <property type="entry name" value="GroEL-like equatorial domain"/>
    <property type="match status" value="1"/>
</dbReference>
<dbReference type="Gene3D" id="3.30.260.10">
    <property type="entry name" value="TCP-1-like chaperonin intermediate domain"/>
    <property type="match status" value="1"/>
</dbReference>
<dbReference type="HAMAP" id="MF_00600">
    <property type="entry name" value="CH60"/>
    <property type="match status" value="1"/>
</dbReference>
<dbReference type="InterPro" id="IPR018370">
    <property type="entry name" value="Chaperonin_Cpn60_CS"/>
</dbReference>
<dbReference type="InterPro" id="IPR001844">
    <property type="entry name" value="Cpn60/GroEL"/>
</dbReference>
<dbReference type="InterPro" id="IPR002423">
    <property type="entry name" value="Cpn60/GroEL/TCP-1"/>
</dbReference>
<dbReference type="InterPro" id="IPR027409">
    <property type="entry name" value="GroEL-like_apical_dom_sf"/>
</dbReference>
<dbReference type="InterPro" id="IPR027413">
    <property type="entry name" value="GROEL-like_equatorial_sf"/>
</dbReference>
<dbReference type="InterPro" id="IPR027410">
    <property type="entry name" value="TCP-1-like_intermed_sf"/>
</dbReference>
<dbReference type="NCBIfam" id="TIGR02348">
    <property type="entry name" value="GroEL"/>
    <property type="match status" value="1"/>
</dbReference>
<dbReference type="NCBIfam" id="NF000592">
    <property type="entry name" value="PRK00013.1"/>
    <property type="match status" value="1"/>
</dbReference>
<dbReference type="NCBIfam" id="NF009487">
    <property type="entry name" value="PRK12849.1"/>
    <property type="match status" value="1"/>
</dbReference>
<dbReference type="NCBIfam" id="NF009488">
    <property type="entry name" value="PRK12850.1"/>
    <property type="match status" value="1"/>
</dbReference>
<dbReference type="NCBIfam" id="NF009489">
    <property type="entry name" value="PRK12851.1"/>
    <property type="match status" value="1"/>
</dbReference>
<dbReference type="PANTHER" id="PTHR45633">
    <property type="entry name" value="60 KDA HEAT SHOCK PROTEIN, MITOCHONDRIAL"/>
    <property type="match status" value="1"/>
</dbReference>
<dbReference type="Pfam" id="PF00118">
    <property type="entry name" value="Cpn60_TCP1"/>
    <property type="match status" value="1"/>
</dbReference>
<dbReference type="PRINTS" id="PR00298">
    <property type="entry name" value="CHAPERONIN60"/>
</dbReference>
<dbReference type="SUPFAM" id="SSF52029">
    <property type="entry name" value="GroEL apical domain-like"/>
    <property type="match status" value="1"/>
</dbReference>
<dbReference type="SUPFAM" id="SSF48592">
    <property type="entry name" value="GroEL equatorial domain-like"/>
    <property type="match status" value="1"/>
</dbReference>
<dbReference type="SUPFAM" id="SSF54849">
    <property type="entry name" value="GroEL-intermediate domain like"/>
    <property type="match status" value="1"/>
</dbReference>
<dbReference type="PROSITE" id="PS00296">
    <property type="entry name" value="CHAPERONINS_CPN60"/>
    <property type="match status" value="1"/>
</dbReference>
<feature type="chain" id="PRO_0000332008" description="Chaperonin GroEL 2">
    <location>
        <begin position="1"/>
        <end position="541"/>
    </location>
</feature>
<feature type="binding site" evidence="1">
    <location>
        <begin position="30"/>
        <end position="33"/>
    </location>
    <ligand>
        <name>ATP</name>
        <dbReference type="ChEBI" id="CHEBI:30616"/>
    </ligand>
</feature>
<feature type="binding site" evidence="1">
    <location>
        <position position="51"/>
    </location>
    <ligand>
        <name>ATP</name>
        <dbReference type="ChEBI" id="CHEBI:30616"/>
    </ligand>
</feature>
<feature type="binding site" evidence="1">
    <location>
        <begin position="87"/>
        <end position="91"/>
    </location>
    <ligand>
        <name>ATP</name>
        <dbReference type="ChEBI" id="CHEBI:30616"/>
    </ligand>
</feature>
<feature type="binding site" evidence="1">
    <location>
        <position position="415"/>
    </location>
    <ligand>
        <name>ATP</name>
        <dbReference type="ChEBI" id="CHEBI:30616"/>
    </ligand>
</feature>
<feature type="binding site" evidence="1">
    <location>
        <position position="496"/>
    </location>
    <ligand>
        <name>ATP</name>
        <dbReference type="ChEBI" id="CHEBI:30616"/>
    </ligand>
</feature>
<sequence>MASKDVKFAGDARARLLSGIDTLADAVKVTLGPKGRNVVIDKSFGAPRITKDGVTVAKEIELSDKFENLGAQLLREVASKTNDLAGDGTTTATVLAQSIVREGLKAVAAGFNPQDVKRGIDHATTAVIEELRTRTRPIATREETAQVATISANGEVEIGRIISEAVQKVGKDGVITVEEAKGFETELDVVEGLQFDRGYISPYFVTNSEKLIADLENPYILIHEKKLSSLQPLLPLLENVVKSGRPLLSIAEDVEGEALATLVVNKLRGGLKIAAVKAPGFGDRRKAILEDIAILTGGEVISEDLGIKLESVTLSQLGQARRIVIDKDNTTIVDGEGDADAIKGRVGQIRAQIEETTSDYDREKLQERLAKLAGGVAIIRVGGSTEIEVKERKDRVDDALNATRAAVEEGIVPGGGTALARAAEVVARLQFHNDDQRIGGDIVRKALQAPLRQIAENAGEDGAVVAGKVLENGAYNFGFDAQIGEFKDLVAAGIIDPTKVVRTALQDAASVGSLLITTEVLVTEKAEPKPAAPPAGADLGY</sequence>
<comment type="function">
    <text evidence="1">Together with its co-chaperonin GroES, plays an essential role in assisting protein folding. The GroEL-GroES system forms a nano-cage that allows encapsulation of the non-native substrate proteins and provides a physical environment optimized to promote and accelerate protein folding.</text>
</comment>
<comment type="catalytic activity">
    <reaction evidence="1">
        <text>ATP + H2O + a folded polypeptide = ADP + phosphate + an unfolded polypeptide.</text>
        <dbReference type="EC" id="5.6.1.7"/>
    </reaction>
</comment>
<comment type="subunit">
    <text evidence="1">Forms a cylinder of 14 subunits composed of two heptameric rings stacked back-to-back. Interacts with the co-chaperonin GroES.</text>
</comment>
<comment type="subcellular location">
    <subcellularLocation>
        <location evidence="1">Cytoplasm</location>
    </subcellularLocation>
</comment>
<comment type="similarity">
    <text evidence="1">Belongs to the chaperonin (HSP60) family.</text>
</comment>
<name>CH602_GLUDA</name>
<proteinExistence type="inferred from homology"/>
<accession>A9HPH6</accession>
<accession>B5ZF07</accession>
<keyword id="KW-0067">ATP-binding</keyword>
<keyword id="KW-0143">Chaperone</keyword>
<keyword id="KW-0963">Cytoplasm</keyword>
<keyword id="KW-0413">Isomerase</keyword>
<keyword id="KW-0547">Nucleotide-binding</keyword>
<keyword id="KW-1185">Reference proteome</keyword>
<protein>
    <recommendedName>
        <fullName evidence="1">Chaperonin GroEL 2</fullName>
        <ecNumber evidence="1">5.6.1.7</ecNumber>
    </recommendedName>
    <alternativeName>
        <fullName evidence="1">60 kDa chaperonin 2</fullName>
    </alternativeName>
    <alternativeName>
        <fullName evidence="1">Chaperonin-60 2</fullName>
        <shortName evidence="1">Cpn60 2</shortName>
    </alternativeName>
</protein>